<protein>
    <recommendedName>
        <fullName>E3 ubiquitin-protein ligase RNF113A</fullName>
        <ecNumber evidence="6 7">2.3.2.27</ecNumber>
    </recommendedName>
    <alternativeName>
        <fullName evidence="13">Cwc24 homolog</fullName>
    </alternativeName>
    <alternativeName>
        <fullName>RING finger protein 113A</fullName>
    </alternativeName>
    <alternativeName>
        <fullName evidence="12">Zinc finger protein 183</fullName>
    </alternativeName>
</protein>
<dbReference type="EC" id="2.3.2.27" evidence="6 7"/>
<dbReference type="EMBL" id="X98253">
    <property type="protein sequence ID" value="CAA66907.1"/>
    <property type="molecule type" value="mRNA"/>
</dbReference>
<dbReference type="EMBL" id="AK314778">
    <property type="protein sequence ID" value="BAG37314.1"/>
    <property type="molecule type" value="mRNA"/>
</dbReference>
<dbReference type="EMBL" id="BT007175">
    <property type="protein sequence ID" value="AAP35839.1"/>
    <property type="molecule type" value="mRNA"/>
</dbReference>
<dbReference type="EMBL" id="AC002477">
    <property type="protein sequence ID" value="AAB67605.1"/>
    <property type="molecule type" value="Genomic_DNA"/>
</dbReference>
<dbReference type="EMBL" id="BC000832">
    <property type="protein sequence ID" value="AAH00832.1"/>
    <property type="molecule type" value="mRNA"/>
</dbReference>
<dbReference type="EMBL" id="BC020556">
    <property type="protein sequence ID" value="AAH20556.1"/>
    <property type="molecule type" value="mRNA"/>
</dbReference>
<dbReference type="CCDS" id="CCDS14589.1"/>
<dbReference type="RefSeq" id="NP_008909.1">
    <property type="nucleotide sequence ID" value="NM_006978.3"/>
</dbReference>
<dbReference type="PDB" id="5Z56">
    <property type="method" value="EM"/>
    <property type="resolution" value="5.10 A"/>
    <property type="chains" value="M=1-343"/>
</dbReference>
<dbReference type="PDB" id="5Z58">
    <property type="method" value="EM"/>
    <property type="resolution" value="4.90 A"/>
    <property type="chains" value="M=1-343"/>
</dbReference>
<dbReference type="PDB" id="6FF4">
    <property type="method" value="EM"/>
    <property type="resolution" value="16.00 A"/>
    <property type="chains" value="t=1-343"/>
</dbReference>
<dbReference type="PDB" id="6FF7">
    <property type="method" value="EM"/>
    <property type="resolution" value="4.50 A"/>
    <property type="chains" value="t=1-343"/>
</dbReference>
<dbReference type="PDB" id="7DVQ">
    <property type="method" value="EM"/>
    <property type="resolution" value="2.89 A"/>
    <property type="chains" value="M=1-343"/>
</dbReference>
<dbReference type="PDB" id="7QTT">
    <property type="method" value="EM"/>
    <property type="resolution" value="3.10 A"/>
    <property type="chains" value="Z=1-343"/>
</dbReference>
<dbReference type="PDB" id="8CH6">
    <property type="method" value="EM"/>
    <property type="resolution" value="5.90 A"/>
    <property type="chains" value="Z=1-343"/>
</dbReference>
<dbReference type="PDB" id="8I0R">
    <property type="method" value="EM"/>
    <property type="resolution" value="3.00 A"/>
    <property type="chains" value="K=1-343"/>
</dbReference>
<dbReference type="PDB" id="8I0S">
    <property type="method" value="EM"/>
    <property type="resolution" value="4.20 A"/>
    <property type="chains" value="K=1-343"/>
</dbReference>
<dbReference type="PDB" id="8I0T">
    <property type="method" value="EM"/>
    <property type="resolution" value="3.00 A"/>
    <property type="chains" value="K=1-343"/>
</dbReference>
<dbReference type="PDB" id="8I0U">
    <property type="method" value="EM"/>
    <property type="resolution" value="3.30 A"/>
    <property type="chains" value="K=1-343"/>
</dbReference>
<dbReference type="PDBsum" id="5Z56"/>
<dbReference type="PDBsum" id="5Z58"/>
<dbReference type="PDBsum" id="6FF4"/>
<dbReference type="PDBsum" id="6FF7"/>
<dbReference type="PDBsum" id="7DVQ"/>
<dbReference type="PDBsum" id="7QTT"/>
<dbReference type="PDBsum" id="8CH6"/>
<dbReference type="PDBsum" id="8I0R"/>
<dbReference type="PDBsum" id="8I0S"/>
<dbReference type="PDBsum" id="8I0T"/>
<dbReference type="PDBsum" id="8I0U"/>
<dbReference type="EMDB" id="EMD-14146"/>
<dbReference type="EMDB" id="EMD-16658"/>
<dbReference type="EMDB" id="EMD-30875"/>
<dbReference type="EMDB" id="EMD-35107"/>
<dbReference type="EMDB" id="EMD-35108"/>
<dbReference type="EMDB" id="EMD-35109"/>
<dbReference type="EMDB" id="EMD-35110"/>
<dbReference type="EMDB" id="EMD-4255"/>
<dbReference type="EMDB" id="EMD-6889"/>
<dbReference type="EMDB" id="EMD-6891"/>
<dbReference type="SMR" id="O15541"/>
<dbReference type="BioGRID" id="113523">
    <property type="interactions" value="695"/>
</dbReference>
<dbReference type="FunCoup" id="O15541">
    <property type="interactions" value="1910"/>
</dbReference>
<dbReference type="IntAct" id="O15541">
    <property type="interactions" value="26"/>
</dbReference>
<dbReference type="MINT" id="O15541"/>
<dbReference type="STRING" id="9606.ENSP00000360497"/>
<dbReference type="GlyGen" id="O15541">
    <property type="glycosylation" value="1 site, 1 O-linked glycan (1 site)"/>
</dbReference>
<dbReference type="iPTMnet" id="O15541"/>
<dbReference type="PhosphoSitePlus" id="O15541"/>
<dbReference type="BioMuta" id="RNF113A"/>
<dbReference type="jPOST" id="O15541"/>
<dbReference type="MassIVE" id="O15541"/>
<dbReference type="PaxDb" id="9606-ENSP00000360497"/>
<dbReference type="PeptideAtlas" id="O15541"/>
<dbReference type="ProteomicsDB" id="48749"/>
<dbReference type="Pumba" id="O15541"/>
<dbReference type="Antibodypedia" id="382">
    <property type="antibodies" value="100 antibodies from 16 providers"/>
</dbReference>
<dbReference type="DNASU" id="7737"/>
<dbReference type="Ensembl" id="ENST00000371442.4">
    <property type="protein sequence ID" value="ENSP00000360497.2"/>
    <property type="gene ID" value="ENSG00000125352.6"/>
</dbReference>
<dbReference type="GeneID" id="7737"/>
<dbReference type="KEGG" id="hsa:7737"/>
<dbReference type="MANE-Select" id="ENST00000371442.4">
    <property type="protein sequence ID" value="ENSP00000360497.2"/>
    <property type="RefSeq nucleotide sequence ID" value="NM_006978.3"/>
    <property type="RefSeq protein sequence ID" value="NP_008909.1"/>
</dbReference>
<dbReference type="UCSC" id="uc004esb.4">
    <property type="organism name" value="human"/>
</dbReference>
<dbReference type="AGR" id="HGNC:12974"/>
<dbReference type="CTD" id="7737"/>
<dbReference type="DisGeNET" id="7737"/>
<dbReference type="GeneCards" id="RNF113A"/>
<dbReference type="HGNC" id="HGNC:12974">
    <property type="gene designation" value="RNF113A"/>
</dbReference>
<dbReference type="HPA" id="ENSG00000125352">
    <property type="expression patterns" value="Low tissue specificity"/>
</dbReference>
<dbReference type="MalaCards" id="RNF113A"/>
<dbReference type="MIM" id="300951">
    <property type="type" value="gene"/>
</dbReference>
<dbReference type="MIM" id="300953">
    <property type="type" value="phenotype"/>
</dbReference>
<dbReference type="neXtProt" id="NX_O15541"/>
<dbReference type="OpenTargets" id="ENSG00000125352"/>
<dbReference type="Orphanet" id="33364">
    <property type="disease" value="Trichothiodystrophy"/>
</dbReference>
<dbReference type="PharmGKB" id="PA37556"/>
<dbReference type="VEuPathDB" id="HostDB:ENSG00000125352"/>
<dbReference type="eggNOG" id="KOG1813">
    <property type="taxonomic scope" value="Eukaryota"/>
</dbReference>
<dbReference type="GeneTree" id="ENSGT00390000016292"/>
<dbReference type="HOGENOM" id="CLU_050460_1_0_1"/>
<dbReference type="InParanoid" id="O15541"/>
<dbReference type="OMA" id="WQLEADH"/>
<dbReference type="OrthoDB" id="25761at2759"/>
<dbReference type="PAN-GO" id="O15541">
    <property type="GO annotations" value="2 GO annotations based on evolutionary models"/>
</dbReference>
<dbReference type="PhylomeDB" id="O15541"/>
<dbReference type="TreeFam" id="TF313469"/>
<dbReference type="PathwayCommons" id="O15541"/>
<dbReference type="Reactome" id="R-HSA-72163">
    <property type="pathway name" value="mRNA Splicing - Major Pathway"/>
</dbReference>
<dbReference type="SignaLink" id="O15541"/>
<dbReference type="SIGNOR" id="O15541"/>
<dbReference type="UniPathway" id="UPA00143"/>
<dbReference type="BioGRID-ORCS" id="7737">
    <property type="hits" value="412 hits in 823 CRISPR screens"/>
</dbReference>
<dbReference type="GenomeRNAi" id="7737"/>
<dbReference type="Pharos" id="O15541">
    <property type="development level" value="Tbio"/>
</dbReference>
<dbReference type="PRO" id="PR:O15541"/>
<dbReference type="Proteomes" id="UP000005640">
    <property type="component" value="Chromosome X"/>
</dbReference>
<dbReference type="RNAct" id="O15541">
    <property type="molecule type" value="protein"/>
</dbReference>
<dbReference type="Bgee" id="ENSG00000125352">
    <property type="expression patterns" value="Expressed in granulocyte and 158 other cell types or tissues"/>
</dbReference>
<dbReference type="GO" id="GO:0016607">
    <property type="term" value="C:nuclear speck"/>
    <property type="evidence" value="ECO:0007669"/>
    <property type="project" value="UniProtKB-SubCell"/>
</dbReference>
<dbReference type="GO" id="GO:0005654">
    <property type="term" value="C:nucleoplasm"/>
    <property type="evidence" value="ECO:0000314"/>
    <property type="project" value="HPA"/>
</dbReference>
<dbReference type="GO" id="GO:0005634">
    <property type="term" value="C:nucleus"/>
    <property type="evidence" value="ECO:0000314"/>
    <property type="project" value="UniProtKB"/>
</dbReference>
<dbReference type="GO" id="GO:0071005">
    <property type="term" value="C:U2-type precatalytic spliceosome"/>
    <property type="evidence" value="ECO:0000314"/>
    <property type="project" value="UniProtKB"/>
</dbReference>
<dbReference type="GO" id="GO:0005684">
    <property type="term" value="C:U2-type spliceosomal complex"/>
    <property type="evidence" value="ECO:0000318"/>
    <property type="project" value="GO_Central"/>
</dbReference>
<dbReference type="GO" id="GO:0061630">
    <property type="term" value="F:ubiquitin protein ligase activity"/>
    <property type="evidence" value="ECO:0000315"/>
    <property type="project" value="UniProtKB"/>
</dbReference>
<dbReference type="GO" id="GO:0008270">
    <property type="term" value="F:zinc ion binding"/>
    <property type="evidence" value="ECO:0007669"/>
    <property type="project" value="UniProtKB-KW"/>
</dbReference>
<dbReference type="GO" id="GO:0006281">
    <property type="term" value="P:DNA repair"/>
    <property type="evidence" value="ECO:0007669"/>
    <property type="project" value="UniProtKB-KW"/>
</dbReference>
<dbReference type="GO" id="GO:0000398">
    <property type="term" value="P:mRNA splicing, via spliceosome"/>
    <property type="evidence" value="ECO:0000314"/>
    <property type="project" value="UniProtKB"/>
</dbReference>
<dbReference type="GO" id="GO:0070100">
    <property type="term" value="P:negative regulation of chemokine-mediated signaling pathway"/>
    <property type="evidence" value="ECO:0000315"/>
    <property type="project" value="UniProtKB"/>
</dbReference>
<dbReference type="GO" id="GO:0016567">
    <property type="term" value="P:protein ubiquitination"/>
    <property type="evidence" value="ECO:0000315"/>
    <property type="project" value="UniProtKB"/>
</dbReference>
<dbReference type="GO" id="GO:0034247">
    <property type="term" value="P:snoRNA splicing"/>
    <property type="evidence" value="ECO:0000318"/>
    <property type="project" value="GO_Central"/>
</dbReference>
<dbReference type="CDD" id="cd16539">
    <property type="entry name" value="RING-HC_RNF113A_B"/>
    <property type="match status" value="1"/>
</dbReference>
<dbReference type="FunFam" id="3.30.40.10:FF:000045">
    <property type="entry name" value="RING finger protein 113A"/>
    <property type="match status" value="1"/>
</dbReference>
<dbReference type="Gene3D" id="3.30.40.10">
    <property type="entry name" value="Zinc/RING finger domain, C3HC4 (zinc finger)"/>
    <property type="match status" value="1"/>
</dbReference>
<dbReference type="InterPro" id="IPR039971">
    <property type="entry name" value="CWC24-like"/>
</dbReference>
<dbReference type="InterPro" id="IPR000571">
    <property type="entry name" value="Znf_CCCH"/>
</dbReference>
<dbReference type="InterPro" id="IPR036855">
    <property type="entry name" value="Znf_CCCH_sf"/>
</dbReference>
<dbReference type="InterPro" id="IPR001841">
    <property type="entry name" value="Znf_RING"/>
</dbReference>
<dbReference type="InterPro" id="IPR013083">
    <property type="entry name" value="Znf_RING/FYVE/PHD"/>
</dbReference>
<dbReference type="InterPro" id="IPR017907">
    <property type="entry name" value="Znf_RING_CS"/>
</dbReference>
<dbReference type="PANTHER" id="PTHR12930:SF2">
    <property type="entry name" value="E3 UBIQUITIN-PROTEIN LIGASE RNF113A"/>
    <property type="match status" value="1"/>
</dbReference>
<dbReference type="PANTHER" id="PTHR12930">
    <property type="entry name" value="ZINC FINGER PROTEIN 183"/>
    <property type="match status" value="1"/>
</dbReference>
<dbReference type="Pfam" id="PF13920">
    <property type="entry name" value="zf-C3HC4_3"/>
    <property type="match status" value="1"/>
</dbReference>
<dbReference type="Pfam" id="PF00642">
    <property type="entry name" value="zf-CCCH"/>
    <property type="match status" value="1"/>
</dbReference>
<dbReference type="SMART" id="SM00184">
    <property type="entry name" value="RING"/>
    <property type="match status" value="1"/>
</dbReference>
<dbReference type="SMART" id="SM00356">
    <property type="entry name" value="ZnF_C3H1"/>
    <property type="match status" value="1"/>
</dbReference>
<dbReference type="SUPFAM" id="SSF90229">
    <property type="entry name" value="CCCH zinc finger"/>
    <property type="match status" value="1"/>
</dbReference>
<dbReference type="SUPFAM" id="SSF57850">
    <property type="entry name" value="RING/U-box"/>
    <property type="match status" value="1"/>
</dbReference>
<dbReference type="PROSITE" id="PS50103">
    <property type="entry name" value="ZF_C3H1"/>
    <property type="match status" value="1"/>
</dbReference>
<dbReference type="PROSITE" id="PS00518">
    <property type="entry name" value="ZF_RING_1"/>
    <property type="match status" value="1"/>
</dbReference>
<dbReference type="PROSITE" id="PS50089">
    <property type="entry name" value="ZF_RING_2"/>
    <property type="match status" value="1"/>
</dbReference>
<keyword id="KW-0002">3D-structure</keyword>
<keyword id="KW-0007">Acetylation</keyword>
<keyword id="KW-0227">DNA damage</keyword>
<keyword id="KW-0234">DNA repair</keyword>
<keyword id="KW-0479">Metal-binding</keyword>
<keyword id="KW-0507">mRNA processing</keyword>
<keyword id="KW-0508">mRNA splicing</keyword>
<keyword id="KW-0539">Nucleus</keyword>
<keyword id="KW-0597">Phosphoprotein</keyword>
<keyword id="KW-1267">Proteomics identification</keyword>
<keyword id="KW-1185">Reference proteome</keyword>
<keyword id="KW-0747">Spliceosome</keyword>
<keyword id="KW-0808">Transferase</keyword>
<keyword id="KW-0833">Ubl conjugation pathway</keyword>
<keyword id="KW-0862">Zinc</keyword>
<keyword id="KW-0863">Zinc-finger</keyword>
<comment type="function">
    <text evidence="6 7 8 9 14">Required for pre-mRNA splicing as component of the spliceosome (PubMed:29360106, PubMed:29361316). As a component of the minor spliceosome, involved in the splicing of U12-type introns in pre-mRNAs (Probable). E3 ubiquitin-protein ligase that catalyzes the transfer of ubiquitin onto target proteins (PubMed:28978524, PubMed:29144457). Catalyzes polyubiquitination of SNRNP200/BRR2 with non-canonical 'Lys-63'-linked polyubiquitin chains (PubMed:29144457). Plays a role in DNA repair via its role in the synthesis of 'Lys-63'-linked polyubiquitin chains that recruit ALKBH3 and the ASCC complex to sites of DNA damage by alkylating agents (PubMed:29144457). Ubiquitinates CXCR4, leading to its degradation, and thereby contributes to the termination of CXCR4 signaling (PubMed:28978524).</text>
</comment>
<comment type="catalytic activity">
    <reaction evidence="6 7">
        <text>S-ubiquitinyl-[E2 ubiquitin-conjugating enzyme]-L-cysteine + [acceptor protein]-L-lysine = [E2 ubiquitin-conjugating enzyme]-L-cysteine + N(6)-ubiquitinyl-[acceptor protein]-L-lysine.</text>
        <dbReference type="EC" id="2.3.2.27"/>
    </reaction>
</comment>
<comment type="pathway">
    <text evidence="6 7">Protein modification; protein ubiquitination.</text>
</comment>
<comment type="subunit">
    <text evidence="4 7 8 9 10">Component of pre-catalytic and catalytic spliceosome complexes (PubMed:22365833, PubMed:29360106, PubMed:29361316). Interacts (via N-terminus) with the spliceosome subunit SNRNP200/BRR2 (PubMed:29144457). Component of the minor spliceosome, which splices U12-type introns. Within this complex, interacts with SCNM1 and CRIPT (PubMed:33509932).</text>
</comment>
<comment type="interaction">
    <interactant intactId="EBI-2130294">
        <id>O15541</id>
    </interactant>
    <interactant intactId="EBI-713456">
        <id>Q13123</id>
        <label>IK</label>
    </interactant>
    <organismsDiffer>false</organismsDiffer>
    <experiments>2</experiments>
</comment>
<comment type="interaction">
    <interactant intactId="EBI-2130294">
        <id>O15541</id>
    </interactant>
    <interactant intactId="EBI-749111">
        <id>Q13435</id>
        <label>SF3B2</label>
    </interactant>
    <organismsDiffer>false</organismsDiffer>
    <experiments>2</experiments>
</comment>
<comment type="interaction">
    <interactant intactId="EBI-2130294">
        <id>O15541</id>
    </interactant>
    <interactant intactId="EBI-1045395">
        <id>O75643</id>
        <label>SNRNP200</label>
    </interactant>
    <organismsDiffer>false</organismsDiffer>
    <experiments>2</experiments>
</comment>
<comment type="subcellular location">
    <subcellularLocation>
        <location evidence="8 9">Nucleus</location>
    </subcellularLocation>
    <subcellularLocation>
        <location evidence="7">Nucleus speckle</location>
    </subcellularLocation>
    <text evidence="7">Colocalizes with ASCC2 in nuclear foci after DNA damage by alkylating agents. In the absence of DNA damage, colocalizes with the spliceosome components SNRNP200/BRR2 and PRPF8 in nuclear speckles.</text>
</comment>
<comment type="tissue specificity">
    <text evidence="11">Ubiquitous.</text>
</comment>
<comment type="disease" evidence="5">
    <disease id="DI-04442">
        <name>Trichothiodystrophy 5, non-photosensitive</name>
        <acronym>TTD5</acronym>
        <description>An X-linked form of trichothiodystrophy, a disease characterized by sulfur-deficient brittle hair and multisystem variable abnormalities. The spectrum of clinical features varies from mild disease with only hair involvement to severe disease with cutaneous, neurologic and profound developmental defects. Ichthyosis, intellectual and developmental disabilities, decreased fertility, abnormal characteristics at birth, ocular abnormalities, short stature, and infections are common manifestations. There are both photosensitive and non-photosensitive forms of the disorder. TTD5 features include microcephaly, profound intellectual disability, sparse brittle hair, aged appearance, short stature, facial dysmorphism, seizures, an immunoglobulin deficiency, multiple endocrine abnormalities, cerebellar hypoplasia and partial absence of the corpus callosum, in the absence of cellular photosensitivity and ichthyosis.</description>
        <dbReference type="MIM" id="300953"/>
    </disease>
    <text>The disease is caused by variants affecting the gene represented in this entry.</text>
</comment>
<sequence length="343" mass="38787">MAEQLSPGKAVDQVCTFLFKKPGRKGAAGRRKRPACDPEPGESGSSSDEGCTVVRPEKKRVTHNPMIQKTRDSGKQKAAYGDLSSEEEEENEPESLGVVYKSTRSAKPVGPEDMGATAVYELDTEKERDAQAIFERSQKIQEELRGKEDDKIYRGINNYQKYMKPKDTSMGNASSGMVRKGPIRAPEHLRATVRWDYQPDICKDYKETGFCGFGDSCKFLHDRSDYKHGWQIERELDEGRYGVYEDENYEVGSDDEEIPFKCFICRQSFQNPVVTKCRHYFCESCALQHFRTTPRCYVCDQQTNGVFNPAKELIAKLEKHRATGEGGASDLPEDPDEDAIPIT</sequence>
<gene>
    <name type="primary">RNF113A</name>
    <name type="synonym">RNF113</name>
    <name evidence="12" type="synonym">ZNF183</name>
</gene>
<reference key="1">
    <citation type="journal article" date="1997" name="Gene">
        <title>Identification of a new member (ZNF183) of the Ring finger gene family in Xq24-25.</title>
        <authorList>
            <person name="Frattini A."/>
            <person name="Faranda S."/>
            <person name="Bagnasco L."/>
            <person name="Patrosso C."/>
            <person name="Nulli P."/>
            <person name="Zucchi I."/>
            <person name="Vezzoni P."/>
        </authorList>
    </citation>
    <scope>NUCLEOTIDE SEQUENCE [MRNA]</scope>
    <scope>TISSUE SPECIFICITY</scope>
</reference>
<reference key="2">
    <citation type="journal article" date="2004" name="Nat. Genet.">
        <title>Complete sequencing and characterization of 21,243 full-length human cDNAs.</title>
        <authorList>
            <person name="Ota T."/>
            <person name="Suzuki Y."/>
            <person name="Nishikawa T."/>
            <person name="Otsuki T."/>
            <person name="Sugiyama T."/>
            <person name="Irie R."/>
            <person name="Wakamatsu A."/>
            <person name="Hayashi K."/>
            <person name="Sato H."/>
            <person name="Nagai K."/>
            <person name="Kimura K."/>
            <person name="Makita H."/>
            <person name="Sekine M."/>
            <person name="Obayashi M."/>
            <person name="Nishi T."/>
            <person name="Shibahara T."/>
            <person name="Tanaka T."/>
            <person name="Ishii S."/>
            <person name="Yamamoto J."/>
            <person name="Saito K."/>
            <person name="Kawai Y."/>
            <person name="Isono Y."/>
            <person name="Nakamura Y."/>
            <person name="Nagahari K."/>
            <person name="Murakami K."/>
            <person name="Yasuda T."/>
            <person name="Iwayanagi T."/>
            <person name="Wagatsuma M."/>
            <person name="Shiratori A."/>
            <person name="Sudo H."/>
            <person name="Hosoiri T."/>
            <person name="Kaku Y."/>
            <person name="Kodaira H."/>
            <person name="Kondo H."/>
            <person name="Sugawara M."/>
            <person name="Takahashi M."/>
            <person name="Kanda K."/>
            <person name="Yokoi T."/>
            <person name="Furuya T."/>
            <person name="Kikkawa E."/>
            <person name="Omura Y."/>
            <person name="Abe K."/>
            <person name="Kamihara K."/>
            <person name="Katsuta N."/>
            <person name="Sato K."/>
            <person name="Tanikawa M."/>
            <person name="Yamazaki M."/>
            <person name="Ninomiya K."/>
            <person name="Ishibashi T."/>
            <person name="Yamashita H."/>
            <person name="Murakawa K."/>
            <person name="Fujimori K."/>
            <person name="Tanai H."/>
            <person name="Kimata M."/>
            <person name="Watanabe M."/>
            <person name="Hiraoka S."/>
            <person name="Chiba Y."/>
            <person name="Ishida S."/>
            <person name="Ono Y."/>
            <person name="Takiguchi S."/>
            <person name="Watanabe S."/>
            <person name="Yosida M."/>
            <person name="Hotuta T."/>
            <person name="Kusano J."/>
            <person name="Kanehori K."/>
            <person name="Takahashi-Fujii A."/>
            <person name="Hara H."/>
            <person name="Tanase T.-O."/>
            <person name="Nomura Y."/>
            <person name="Togiya S."/>
            <person name="Komai F."/>
            <person name="Hara R."/>
            <person name="Takeuchi K."/>
            <person name="Arita M."/>
            <person name="Imose N."/>
            <person name="Musashino K."/>
            <person name="Yuuki H."/>
            <person name="Oshima A."/>
            <person name="Sasaki N."/>
            <person name="Aotsuka S."/>
            <person name="Yoshikawa Y."/>
            <person name="Matsunawa H."/>
            <person name="Ichihara T."/>
            <person name="Shiohata N."/>
            <person name="Sano S."/>
            <person name="Moriya S."/>
            <person name="Momiyama H."/>
            <person name="Satoh N."/>
            <person name="Takami S."/>
            <person name="Terashima Y."/>
            <person name="Suzuki O."/>
            <person name="Nakagawa S."/>
            <person name="Senoh A."/>
            <person name="Mizoguchi H."/>
            <person name="Goto Y."/>
            <person name="Shimizu F."/>
            <person name="Wakebe H."/>
            <person name="Hishigaki H."/>
            <person name="Watanabe T."/>
            <person name="Sugiyama A."/>
            <person name="Takemoto M."/>
            <person name="Kawakami B."/>
            <person name="Yamazaki M."/>
            <person name="Watanabe K."/>
            <person name="Kumagai A."/>
            <person name="Itakura S."/>
            <person name="Fukuzumi Y."/>
            <person name="Fujimori Y."/>
            <person name="Komiyama M."/>
            <person name="Tashiro H."/>
            <person name="Tanigami A."/>
            <person name="Fujiwara T."/>
            <person name="Ono T."/>
            <person name="Yamada K."/>
            <person name="Fujii Y."/>
            <person name="Ozaki K."/>
            <person name="Hirao M."/>
            <person name="Ohmori Y."/>
            <person name="Kawabata A."/>
            <person name="Hikiji T."/>
            <person name="Kobatake N."/>
            <person name="Inagaki H."/>
            <person name="Ikema Y."/>
            <person name="Okamoto S."/>
            <person name="Okitani R."/>
            <person name="Kawakami T."/>
            <person name="Noguchi S."/>
            <person name="Itoh T."/>
            <person name="Shigeta K."/>
            <person name="Senba T."/>
            <person name="Matsumura K."/>
            <person name="Nakajima Y."/>
            <person name="Mizuno T."/>
            <person name="Morinaga M."/>
            <person name="Sasaki M."/>
            <person name="Togashi T."/>
            <person name="Oyama M."/>
            <person name="Hata H."/>
            <person name="Watanabe M."/>
            <person name="Komatsu T."/>
            <person name="Mizushima-Sugano J."/>
            <person name="Satoh T."/>
            <person name="Shirai Y."/>
            <person name="Takahashi Y."/>
            <person name="Nakagawa K."/>
            <person name="Okumura K."/>
            <person name="Nagase T."/>
            <person name="Nomura N."/>
            <person name="Kikuchi H."/>
            <person name="Masuho Y."/>
            <person name="Yamashita R."/>
            <person name="Nakai K."/>
            <person name="Yada T."/>
            <person name="Nakamura Y."/>
            <person name="Ohara O."/>
            <person name="Isogai T."/>
            <person name="Sugano S."/>
        </authorList>
    </citation>
    <scope>NUCLEOTIDE SEQUENCE [LARGE SCALE MRNA]</scope>
    <source>
        <tissue>Cerebellum</tissue>
    </source>
</reference>
<reference key="3">
    <citation type="submission" date="2004-10" db="EMBL/GenBank/DDBJ databases">
        <title>Cloning of human full-length CDSs in BD Creator(TM) system donor vector.</title>
        <authorList>
            <person name="Kalnine N."/>
            <person name="Chen X."/>
            <person name="Rolfs A."/>
            <person name="Halleck A."/>
            <person name="Hines L."/>
            <person name="Eisenstein S."/>
            <person name="Koundinya M."/>
            <person name="Raphael J."/>
            <person name="Moreira D."/>
            <person name="Kelley T."/>
            <person name="LaBaer J."/>
            <person name="Lin Y."/>
            <person name="Phelan M."/>
            <person name="Farmer A."/>
        </authorList>
    </citation>
    <scope>NUCLEOTIDE SEQUENCE [LARGE SCALE MRNA]</scope>
</reference>
<reference key="4">
    <citation type="journal article" date="2005" name="Nature">
        <title>The DNA sequence of the human X chromosome.</title>
        <authorList>
            <person name="Ross M.T."/>
            <person name="Grafham D.V."/>
            <person name="Coffey A.J."/>
            <person name="Scherer S."/>
            <person name="McLay K."/>
            <person name="Muzny D."/>
            <person name="Platzer M."/>
            <person name="Howell G.R."/>
            <person name="Burrows C."/>
            <person name="Bird C.P."/>
            <person name="Frankish A."/>
            <person name="Lovell F.L."/>
            <person name="Howe K.L."/>
            <person name="Ashurst J.L."/>
            <person name="Fulton R.S."/>
            <person name="Sudbrak R."/>
            <person name="Wen G."/>
            <person name="Jones M.C."/>
            <person name="Hurles M.E."/>
            <person name="Andrews T.D."/>
            <person name="Scott C.E."/>
            <person name="Searle S."/>
            <person name="Ramser J."/>
            <person name="Whittaker A."/>
            <person name="Deadman R."/>
            <person name="Carter N.P."/>
            <person name="Hunt S.E."/>
            <person name="Chen R."/>
            <person name="Cree A."/>
            <person name="Gunaratne P."/>
            <person name="Havlak P."/>
            <person name="Hodgson A."/>
            <person name="Metzker M.L."/>
            <person name="Richards S."/>
            <person name="Scott G."/>
            <person name="Steffen D."/>
            <person name="Sodergren E."/>
            <person name="Wheeler D.A."/>
            <person name="Worley K.C."/>
            <person name="Ainscough R."/>
            <person name="Ambrose K.D."/>
            <person name="Ansari-Lari M.A."/>
            <person name="Aradhya S."/>
            <person name="Ashwell R.I."/>
            <person name="Babbage A.K."/>
            <person name="Bagguley C.L."/>
            <person name="Ballabio A."/>
            <person name="Banerjee R."/>
            <person name="Barker G.E."/>
            <person name="Barlow K.F."/>
            <person name="Barrett I.P."/>
            <person name="Bates K.N."/>
            <person name="Beare D.M."/>
            <person name="Beasley H."/>
            <person name="Beasley O."/>
            <person name="Beck A."/>
            <person name="Bethel G."/>
            <person name="Blechschmidt K."/>
            <person name="Brady N."/>
            <person name="Bray-Allen S."/>
            <person name="Bridgeman A.M."/>
            <person name="Brown A.J."/>
            <person name="Brown M.J."/>
            <person name="Bonnin D."/>
            <person name="Bruford E.A."/>
            <person name="Buhay C."/>
            <person name="Burch P."/>
            <person name="Burford D."/>
            <person name="Burgess J."/>
            <person name="Burrill W."/>
            <person name="Burton J."/>
            <person name="Bye J.M."/>
            <person name="Carder C."/>
            <person name="Carrel L."/>
            <person name="Chako J."/>
            <person name="Chapman J.C."/>
            <person name="Chavez D."/>
            <person name="Chen E."/>
            <person name="Chen G."/>
            <person name="Chen Y."/>
            <person name="Chen Z."/>
            <person name="Chinault C."/>
            <person name="Ciccodicola A."/>
            <person name="Clark S.Y."/>
            <person name="Clarke G."/>
            <person name="Clee C.M."/>
            <person name="Clegg S."/>
            <person name="Clerc-Blankenburg K."/>
            <person name="Clifford K."/>
            <person name="Cobley V."/>
            <person name="Cole C.G."/>
            <person name="Conquer J.S."/>
            <person name="Corby N."/>
            <person name="Connor R.E."/>
            <person name="David R."/>
            <person name="Davies J."/>
            <person name="Davis C."/>
            <person name="Davis J."/>
            <person name="Delgado O."/>
            <person name="Deshazo D."/>
            <person name="Dhami P."/>
            <person name="Ding Y."/>
            <person name="Dinh H."/>
            <person name="Dodsworth S."/>
            <person name="Draper H."/>
            <person name="Dugan-Rocha S."/>
            <person name="Dunham A."/>
            <person name="Dunn M."/>
            <person name="Durbin K.J."/>
            <person name="Dutta I."/>
            <person name="Eades T."/>
            <person name="Ellwood M."/>
            <person name="Emery-Cohen A."/>
            <person name="Errington H."/>
            <person name="Evans K.L."/>
            <person name="Faulkner L."/>
            <person name="Francis F."/>
            <person name="Frankland J."/>
            <person name="Fraser A.E."/>
            <person name="Galgoczy P."/>
            <person name="Gilbert J."/>
            <person name="Gill R."/>
            <person name="Gloeckner G."/>
            <person name="Gregory S.G."/>
            <person name="Gribble S."/>
            <person name="Griffiths C."/>
            <person name="Grocock R."/>
            <person name="Gu Y."/>
            <person name="Gwilliam R."/>
            <person name="Hamilton C."/>
            <person name="Hart E.A."/>
            <person name="Hawes A."/>
            <person name="Heath P.D."/>
            <person name="Heitmann K."/>
            <person name="Hennig S."/>
            <person name="Hernandez J."/>
            <person name="Hinzmann B."/>
            <person name="Ho S."/>
            <person name="Hoffs M."/>
            <person name="Howden P.J."/>
            <person name="Huckle E.J."/>
            <person name="Hume J."/>
            <person name="Hunt P.J."/>
            <person name="Hunt A.R."/>
            <person name="Isherwood J."/>
            <person name="Jacob L."/>
            <person name="Johnson D."/>
            <person name="Jones S."/>
            <person name="de Jong P.J."/>
            <person name="Joseph S.S."/>
            <person name="Keenan S."/>
            <person name="Kelly S."/>
            <person name="Kershaw J.K."/>
            <person name="Khan Z."/>
            <person name="Kioschis P."/>
            <person name="Klages S."/>
            <person name="Knights A.J."/>
            <person name="Kosiura A."/>
            <person name="Kovar-Smith C."/>
            <person name="Laird G.K."/>
            <person name="Langford C."/>
            <person name="Lawlor S."/>
            <person name="Leversha M."/>
            <person name="Lewis L."/>
            <person name="Liu W."/>
            <person name="Lloyd C."/>
            <person name="Lloyd D.M."/>
            <person name="Loulseged H."/>
            <person name="Loveland J.E."/>
            <person name="Lovell J.D."/>
            <person name="Lozado R."/>
            <person name="Lu J."/>
            <person name="Lyne R."/>
            <person name="Ma J."/>
            <person name="Maheshwari M."/>
            <person name="Matthews L.H."/>
            <person name="McDowall J."/>
            <person name="McLaren S."/>
            <person name="McMurray A."/>
            <person name="Meidl P."/>
            <person name="Meitinger T."/>
            <person name="Milne S."/>
            <person name="Miner G."/>
            <person name="Mistry S.L."/>
            <person name="Morgan M."/>
            <person name="Morris S."/>
            <person name="Mueller I."/>
            <person name="Mullikin J.C."/>
            <person name="Nguyen N."/>
            <person name="Nordsiek G."/>
            <person name="Nyakatura G."/>
            <person name="O'dell C.N."/>
            <person name="Okwuonu G."/>
            <person name="Palmer S."/>
            <person name="Pandian R."/>
            <person name="Parker D."/>
            <person name="Parrish J."/>
            <person name="Pasternak S."/>
            <person name="Patel D."/>
            <person name="Pearce A.V."/>
            <person name="Pearson D.M."/>
            <person name="Pelan S.E."/>
            <person name="Perez L."/>
            <person name="Porter K.M."/>
            <person name="Ramsey Y."/>
            <person name="Reichwald K."/>
            <person name="Rhodes S."/>
            <person name="Ridler K.A."/>
            <person name="Schlessinger D."/>
            <person name="Schueler M.G."/>
            <person name="Sehra H.K."/>
            <person name="Shaw-Smith C."/>
            <person name="Shen H."/>
            <person name="Sheridan E.M."/>
            <person name="Shownkeen R."/>
            <person name="Skuce C.D."/>
            <person name="Smith M.L."/>
            <person name="Sotheran E.C."/>
            <person name="Steingruber H.E."/>
            <person name="Steward C.A."/>
            <person name="Storey R."/>
            <person name="Swann R.M."/>
            <person name="Swarbreck D."/>
            <person name="Tabor P.E."/>
            <person name="Taudien S."/>
            <person name="Taylor T."/>
            <person name="Teague B."/>
            <person name="Thomas K."/>
            <person name="Thorpe A."/>
            <person name="Timms K."/>
            <person name="Tracey A."/>
            <person name="Trevanion S."/>
            <person name="Tromans A.C."/>
            <person name="d'Urso M."/>
            <person name="Verduzco D."/>
            <person name="Villasana D."/>
            <person name="Waldron L."/>
            <person name="Wall M."/>
            <person name="Wang Q."/>
            <person name="Warren J."/>
            <person name="Warry G.L."/>
            <person name="Wei X."/>
            <person name="West A."/>
            <person name="Whitehead S.L."/>
            <person name="Whiteley M.N."/>
            <person name="Wilkinson J.E."/>
            <person name="Willey D.L."/>
            <person name="Williams G."/>
            <person name="Williams L."/>
            <person name="Williamson A."/>
            <person name="Williamson H."/>
            <person name="Wilming L."/>
            <person name="Woodmansey R.L."/>
            <person name="Wray P.W."/>
            <person name="Yen J."/>
            <person name="Zhang J."/>
            <person name="Zhou J."/>
            <person name="Zoghbi H."/>
            <person name="Zorilla S."/>
            <person name="Buck D."/>
            <person name="Reinhardt R."/>
            <person name="Poustka A."/>
            <person name="Rosenthal A."/>
            <person name="Lehrach H."/>
            <person name="Meindl A."/>
            <person name="Minx P.J."/>
            <person name="Hillier L.W."/>
            <person name="Willard H.F."/>
            <person name="Wilson R.K."/>
            <person name="Waterston R.H."/>
            <person name="Rice C.M."/>
            <person name="Vaudin M."/>
            <person name="Coulson A."/>
            <person name="Nelson D.L."/>
            <person name="Weinstock G."/>
            <person name="Sulston J.E."/>
            <person name="Durbin R.M."/>
            <person name="Hubbard T."/>
            <person name="Gibbs R.A."/>
            <person name="Beck S."/>
            <person name="Rogers J."/>
            <person name="Bentley D.R."/>
        </authorList>
    </citation>
    <scope>NUCLEOTIDE SEQUENCE [LARGE SCALE GENOMIC DNA]</scope>
</reference>
<reference key="5">
    <citation type="journal article" date="2004" name="Genome Res.">
        <title>The status, quality, and expansion of the NIH full-length cDNA project: the Mammalian Gene Collection (MGC).</title>
        <authorList>
            <consortium name="The MGC Project Team"/>
        </authorList>
    </citation>
    <scope>NUCLEOTIDE SEQUENCE [LARGE SCALE MRNA]</scope>
    <source>
        <tissue>Cervix</tissue>
        <tissue>Placenta</tissue>
    </source>
</reference>
<reference key="6">
    <citation type="journal article" date="2006" name="Cell">
        <title>Global, in vivo, and site-specific phosphorylation dynamics in signaling networks.</title>
        <authorList>
            <person name="Olsen J.V."/>
            <person name="Blagoev B."/>
            <person name="Gnad F."/>
            <person name="Macek B."/>
            <person name="Kumar C."/>
            <person name="Mortensen P."/>
            <person name="Mann M."/>
        </authorList>
    </citation>
    <scope>PHOSPHORYLATION [LARGE SCALE ANALYSIS] AT SER-253</scope>
    <scope>IDENTIFICATION BY MASS SPECTROMETRY [LARGE SCALE ANALYSIS]</scope>
    <source>
        <tissue>Cervix carcinoma</tissue>
    </source>
</reference>
<reference key="7">
    <citation type="journal article" date="2007" name="Electrophoresis">
        <title>Toward a global characterization of the phosphoproteome in prostate cancer cells: identification of phosphoproteins in the LNCaP cell line.</title>
        <authorList>
            <person name="Giorgianni F."/>
            <person name="Zhao Y."/>
            <person name="Desiderio D.M."/>
            <person name="Beranova-Giorgianni S."/>
        </authorList>
    </citation>
    <scope>IDENTIFICATION BY MASS SPECTROMETRY [LARGE SCALE ANALYSIS]</scope>
    <source>
        <tissue>Prostate cancer</tissue>
    </source>
</reference>
<reference key="8">
    <citation type="journal article" date="2008" name="Proc. Natl. Acad. Sci. U.S.A.">
        <title>A quantitative atlas of mitotic phosphorylation.</title>
        <authorList>
            <person name="Dephoure N."/>
            <person name="Zhou C."/>
            <person name="Villen J."/>
            <person name="Beausoleil S.A."/>
            <person name="Bakalarski C.E."/>
            <person name="Elledge S.J."/>
            <person name="Gygi S.P."/>
        </authorList>
    </citation>
    <scope>PHOSPHORYLATION [LARGE SCALE ANALYSIS] AT SER-84; SER-85 AND SER-253</scope>
    <scope>IDENTIFICATION BY MASS SPECTROMETRY [LARGE SCALE ANALYSIS]</scope>
    <source>
        <tissue>Cervix carcinoma</tissue>
    </source>
</reference>
<reference key="9">
    <citation type="journal article" date="2009" name="Anal. Chem.">
        <title>Lys-N and trypsin cover complementary parts of the phosphoproteome in a refined SCX-based approach.</title>
        <authorList>
            <person name="Gauci S."/>
            <person name="Helbig A.O."/>
            <person name="Slijper M."/>
            <person name="Krijgsveld J."/>
            <person name="Heck A.J."/>
            <person name="Mohammed S."/>
        </authorList>
    </citation>
    <scope>ACETYLATION [LARGE SCALE ANALYSIS] AT ALA-2</scope>
    <scope>CLEAVAGE OF INITIATOR METHIONINE [LARGE SCALE ANALYSIS]</scope>
    <scope>IDENTIFICATION BY MASS SPECTROMETRY [LARGE SCALE ANALYSIS]</scope>
</reference>
<reference key="10">
    <citation type="journal article" date="2009" name="Sci. Signal.">
        <title>Quantitative phosphoproteomic analysis of T cell receptor signaling reveals system-wide modulation of protein-protein interactions.</title>
        <authorList>
            <person name="Mayya V."/>
            <person name="Lundgren D.H."/>
            <person name="Hwang S.-I."/>
            <person name="Rezaul K."/>
            <person name="Wu L."/>
            <person name="Eng J.K."/>
            <person name="Rodionov V."/>
            <person name="Han D.K."/>
        </authorList>
    </citation>
    <scope>PHOSPHORYLATION [LARGE SCALE ANALYSIS] AT SER-84</scope>
    <scope>IDENTIFICATION BY MASS SPECTROMETRY [LARGE SCALE ANALYSIS]</scope>
    <source>
        <tissue>Leukemic T-cell</tissue>
    </source>
</reference>
<reference key="11">
    <citation type="journal article" date="2010" name="Sci. Signal.">
        <title>Quantitative phosphoproteomics reveals widespread full phosphorylation site occupancy during mitosis.</title>
        <authorList>
            <person name="Olsen J.V."/>
            <person name="Vermeulen M."/>
            <person name="Santamaria A."/>
            <person name="Kumar C."/>
            <person name="Miller M.L."/>
            <person name="Jensen L.J."/>
            <person name="Gnad F."/>
            <person name="Cox J."/>
            <person name="Jensen T.S."/>
            <person name="Nigg E.A."/>
            <person name="Brunak S."/>
            <person name="Mann M."/>
        </authorList>
    </citation>
    <scope>ACETYLATION [LARGE SCALE ANALYSIS] AT ALA-2</scope>
    <scope>PHOSPHORYLATION [LARGE SCALE ANALYSIS] AT SER-6</scope>
    <scope>CLEAVAGE OF INITIATOR METHIONINE [LARGE SCALE ANALYSIS]</scope>
    <scope>IDENTIFICATION BY MASS SPECTROMETRY [LARGE SCALE ANALYSIS]</scope>
    <source>
        <tissue>Cervix carcinoma</tissue>
    </source>
</reference>
<reference key="12">
    <citation type="journal article" date="2011" name="BMC Syst. Biol.">
        <title>Initial characterization of the human central proteome.</title>
        <authorList>
            <person name="Burkard T.R."/>
            <person name="Planyavsky M."/>
            <person name="Kaupe I."/>
            <person name="Breitwieser F.P."/>
            <person name="Buerckstuemmer T."/>
            <person name="Bennett K.L."/>
            <person name="Superti-Furga G."/>
            <person name="Colinge J."/>
        </authorList>
    </citation>
    <scope>IDENTIFICATION BY MASS SPECTROMETRY [LARGE SCALE ANALYSIS]</scope>
</reference>
<reference key="13">
    <citation type="journal article" date="2011" name="Sci. Signal.">
        <title>System-wide temporal characterization of the proteome and phosphoproteome of human embryonic stem cell differentiation.</title>
        <authorList>
            <person name="Rigbolt K.T."/>
            <person name="Prokhorova T.A."/>
            <person name="Akimov V."/>
            <person name="Henningsen J."/>
            <person name="Johansen P.T."/>
            <person name="Kratchmarova I."/>
            <person name="Kassem M."/>
            <person name="Mann M."/>
            <person name="Olsen J.V."/>
            <person name="Blagoev B."/>
        </authorList>
    </citation>
    <scope>ACETYLATION [LARGE SCALE ANALYSIS] AT ALA-2</scope>
    <scope>PHOSPHORYLATION [LARGE SCALE ANALYSIS] AT SER-6; SER-85 AND SER-253</scope>
    <scope>CLEAVAGE OF INITIATOR METHIONINE [LARGE SCALE ANALYSIS]</scope>
    <scope>IDENTIFICATION BY MASS SPECTROMETRY [LARGE SCALE ANALYSIS]</scope>
</reference>
<reference key="14">
    <citation type="journal article" date="2012" name="Mol. Cell">
        <title>Dynamic protein-protein interaction wiring of the human spliceosome.</title>
        <authorList>
            <person name="Hegele A."/>
            <person name="Kamburov A."/>
            <person name="Grossmann A."/>
            <person name="Sourlis C."/>
            <person name="Wowro S."/>
            <person name="Weimann M."/>
            <person name="Will C.L."/>
            <person name="Pena V."/>
            <person name="Luehrmann R."/>
            <person name="Stelzl U."/>
        </authorList>
    </citation>
    <scope>IDENTIFICATION IN THE SPLICEOSOME</scope>
    <scope>SUBUNIT</scope>
</reference>
<reference key="15">
    <citation type="journal article" date="2013" name="J. Proteome Res.">
        <title>Toward a comprehensive characterization of a human cancer cell phosphoproteome.</title>
        <authorList>
            <person name="Zhou H."/>
            <person name="Di Palma S."/>
            <person name="Preisinger C."/>
            <person name="Peng M."/>
            <person name="Polat A.N."/>
            <person name="Heck A.J."/>
            <person name="Mohammed S."/>
        </authorList>
    </citation>
    <scope>PHOSPHORYLATION [LARGE SCALE ANALYSIS] AT SER-6 AND SER-253</scope>
    <scope>IDENTIFICATION BY MASS SPECTROMETRY [LARGE SCALE ANALYSIS]</scope>
    <source>
        <tissue>Cervix carcinoma</tissue>
        <tissue>Erythroleukemia</tissue>
    </source>
</reference>
<reference key="16">
    <citation type="journal article" date="2014" name="J. Proteomics">
        <title>An enzyme assisted RP-RPLC approach for in-depth analysis of human liver phosphoproteome.</title>
        <authorList>
            <person name="Bian Y."/>
            <person name="Song C."/>
            <person name="Cheng K."/>
            <person name="Dong M."/>
            <person name="Wang F."/>
            <person name="Huang J."/>
            <person name="Sun D."/>
            <person name="Wang L."/>
            <person name="Ye M."/>
            <person name="Zou H."/>
        </authorList>
    </citation>
    <scope>PHOSPHORYLATION [LARGE SCALE ANALYSIS] AT SER-253</scope>
    <scope>IDENTIFICATION BY MASS SPECTROMETRY [LARGE SCALE ANALYSIS]</scope>
    <source>
        <tissue>Liver</tissue>
    </source>
</reference>
<reference key="17">
    <citation type="journal article" date="2015" name="J. Med. Genet.">
        <title>A novel X-linked trichothiodystrophy associated with a nonsense mutation in RNF113A.</title>
        <authorList>
            <person name="Corbett M.A."/>
            <person name="Dudding-Byth T."/>
            <person name="Crock P.A."/>
            <person name="Botta E."/>
            <person name="Christie L.M."/>
            <person name="Nardo T."/>
            <person name="Caligiuri G."/>
            <person name="Hobson L."/>
            <person name="Boyle J."/>
            <person name="Mansour A."/>
            <person name="Friend K.L."/>
            <person name="Crawford J."/>
            <person name="Jackson G."/>
            <person name="Vandeleur L."/>
            <person name="Hackett A."/>
            <person name="Tarpey P."/>
            <person name="Stratton M.R."/>
            <person name="Turner G."/>
            <person name="Gecz J."/>
            <person name="Field M."/>
        </authorList>
    </citation>
    <scope>INVOLVEMENT IN TTD5</scope>
</reference>
<reference key="18">
    <citation type="journal article" date="2017" name="Am. J. Physiol.">
        <title>RING finger protein 113A regulates C-X-C chemokine receptor type 4 stability and signaling.</title>
        <authorList>
            <person name="Lear T."/>
            <person name="Dunn S.R."/>
            <person name="McKelvey A.C."/>
            <person name="Mir A."/>
            <person name="Evankovich J."/>
            <person name="Chen B.B."/>
            <person name="Liu Y."/>
        </authorList>
    </citation>
    <scope>FUNCTION</scope>
    <scope>CATALYTIC ACTIVITY</scope>
    <scope>PATHWAY</scope>
    <scope>INTERACTION WITH CXCR4</scope>
    <scope>MUTAGENESIS OF 50-GLY--VAL-61; CYS-262 AND CYS-277</scope>
</reference>
<reference key="19">
    <citation type="journal article" date="2017" name="Nature">
        <title>A ubiquitin-dependent signalling axis specific for ALKBH-mediated DNA dealkylation repair.</title>
        <authorList>
            <person name="Brickner J.R."/>
            <person name="Soll J.M."/>
            <person name="Lombardi P.M."/>
            <person name="Vaagboe C.B."/>
            <person name="Mudge M.C."/>
            <person name="Oyeniran C."/>
            <person name="Rabe R."/>
            <person name="Jackson J."/>
            <person name="Sullender M.E."/>
            <person name="Blazosky E."/>
            <person name="Byrum A.K."/>
            <person name="Zhao Y."/>
            <person name="Corbett M.A."/>
            <person name="Gecz J."/>
            <person name="Field M."/>
            <person name="Vindigni A."/>
            <person name="Slupphaug G."/>
            <person name="Wolberger C."/>
            <person name="Mosammaparast N."/>
        </authorList>
    </citation>
    <scope>FUNCTION</scope>
    <scope>CATALYTIC ACTIVITY</scope>
    <scope>PATHWAY</scope>
    <scope>INTERACTION WITH SNRNP200</scope>
    <scope>SUBCELLULAR LOCATION</scope>
    <scope>MUTAGENESIS OF 2-ALA--ARG-60; ILE-264 AND 301-GLN--THR-343</scope>
</reference>
<reference evidence="17" key="20">
    <citation type="journal article" date="2018" name="Cell">
        <title>Structure and Conformational Dynamics of the Human Spliceosomal Bact Complex.</title>
        <authorList>
            <person name="Haselbach D."/>
            <person name="Komarov I."/>
            <person name="Agafonov D.E."/>
            <person name="Hartmuth K."/>
            <person name="Graf B."/>
            <person name="Dybkov O."/>
            <person name="Urlaub H."/>
            <person name="Kastner B."/>
            <person name="Luhrmann R."/>
            <person name="Stark H."/>
        </authorList>
    </citation>
    <scope>STRUCTURE BY ELECTRON MICROSCOPY (3.40 ANGSTROMS)</scope>
    <scope>FUNCTION</scope>
    <scope>SUBCELLULAR LOCATION</scope>
    <scope>SUBUNIT</scope>
</reference>
<reference evidence="15 16" key="21">
    <citation type="journal article" date="2018" name="Cell Res.">
        <title>Structure of the human activated spliceosome in three conformational states.</title>
        <authorList>
            <person name="Zhang X."/>
            <person name="Yan C."/>
            <person name="Zhan X."/>
            <person name="Li L."/>
            <person name="Lei J."/>
            <person name="Shi Y."/>
        </authorList>
    </citation>
    <scope>STRUCTURE BY ELECTRON MICROSCOPY (4.90 ANGSTROMS)</scope>
    <scope>FUNCTION</scope>
    <scope>SUBCELLULAR LOCATION</scope>
    <scope>SUBUNIT</scope>
</reference>
<reference evidence="18" key="22">
    <citation type="journal article" date="2021" name="Science">
        <title>Structure of the activated human minor spliceosome.</title>
        <authorList>
            <person name="Bai R."/>
            <person name="Wan R."/>
            <person name="Wang L."/>
            <person name="Xu K."/>
            <person name="Zhang Q."/>
            <person name="Lei J."/>
            <person name="Shi Y."/>
        </authorList>
    </citation>
    <scope>STRUCTURE BY ELECTRON MICROSCOPY (2.89 ANGSTROMS)</scope>
    <scope>FUNCTION</scope>
    <scope>SUBUNIT</scope>
</reference>
<feature type="initiator methionine" description="Removed" evidence="21 23 24">
    <location>
        <position position="1"/>
    </location>
</feature>
<feature type="chain" id="PRO_0000056087" description="E3 ubiquitin-protein ligase RNF113A">
    <location>
        <begin position="2"/>
        <end position="343"/>
    </location>
</feature>
<feature type="zinc finger region" description="C3H1-type" evidence="2">
    <location>
        <begin position="196"/>
        <end position="224"/>
    </location>
</feature>
<feature type="zinc finger region" description="RING-type" evidence="1">
    <location>
        <begin position="262"/>
        <end position="300"/>
    </location>
</feature>
<feature type="region of interest" description="Important for interaction with SNRNP200/BRR2" evidence="7">
    <location>
        <begin position="2"/>
        <end position="60"/>
    </location>
</feature>
<feature type="region of interest" description="Disordered" evidence="3">
    <location>
        <begin position="22"/>
        <end position="96"/>
    </location>
</feature>
<feature type="region of interest" description="Important for interaction with CXCR4" evidence="6">
    <location>
        <begin position="50"/>
        <end position="61"/>
    </location>
</feature>
<feature type="region of interest" description="Disordered" evidence="3">
    <location>
        <begin position="322"/>
        <end position="343"/>
    </location>
</feature>
<feature type="compositionally biased region" description="Basic residues" evidence="3">
    <location>
        <begin position="22"/>
        <end position="33"/>
    </location>
</feature>
<feature type="compositionally biased region" description="Low complexity" evidence="3">
    <location>
        <begin position="41"/>
        <end position="50"/>
    </location>
</feature>
<feature type="compositionally biased region" description="Acidic residues" evidence="3">
    <location>
        <begin position="84"/>
        <end position="93"/>
    </location>
</feature>
<feature type="compositionally biased region" description="Acidic residues" evidence="3">
    <location>
        <begin position="331"/>
        <end position="343"/>
    </location>
</feature>
<feature type="modified residue" description="N-acetylalanine" evidence="21 23 24">
    <location>
        <position position="2"/>
    </location>
</feature>
<feature type="modified residue" description="Phosphoserine" evidence="23 24 25">
    <location>
        <position position="6"/>
    </location>
</feature>
<feature type="modified residue" description="Phosphoserine" evidence="20 22">
    <location>
        <position position="84"/>
    </location>
</feature>
<feature type="modified residue" description="Phosphoserine" evidence="20 24">
    <location>
        <position position="85"/>
    </location>
</feature>
<feature type="modified residue" description="Phosphoserine" evidence="19 20 24 25 26">
    <location>
        <position position="253"/>
    </location>
</feature>
<feature type="mutagenesis site" description="Strongly decreased interaction with SNRNP200/BRR2." evidence="7">
    <location>
        <begin position="2"/>
        <end position="60"/>
    </location>
</feature>
<feature type="mutagenesis site" description="Strongly decreased interaction with CXCR4. Abolishes the ability to promote CXCR4 degradation." evidence="6">
    <location>
        <begin position="50"/>
        <end position="61"/>
    </location>
</feature>
<feature type="mutagenesis site" description="Loss of E3 ubiquitin ligase activity." evidence="6">
    <original>C</original>
    <variation>A</variation>
    <location>
        <position position="262"/>
    </location>
</feature>
<feature type="mutagenesis site" description="Strongly reduced E3 ubiquitin ligase activity." evidence="7">
    <original>I</original>
    <variation>A</variation>
    <location>
        <position position="264"/>
    </location>
</feature>
<feature type="mutagenesis site" description="Loss of E3 ubiquitin ligase activity." evidence="6">
    <original>C</original>
    <variation>A</variation>
    <location>
        <position position="277"/>
    </location>
</feature>
<feature type="mutagenesis site" description="Cells are hypersensitive to DNA damage by alkylating agents." evidence="7">
    <location>
        <begin position="301"/>
        <end position="343"/>
    </location>
</feature>
<feature type="sequence conflict" description="In Ref. 2; BAG37314." evidence="13" ref="2">
    <original>K</original>
    <variation>R</variation>
    <location>
        <position position="21"/>
    </location>
</feature>
<feature type="turn" evidence="28">
    <location>
        <begin position="112"/>
        <end position="117"/>
    </location>
</feature>
<feature type="turn" evidence="28">
    <location>
        <begin position="126"/>
        <end position="128"/>
    </location>
</feature>
<feature type="helix" evidence="28">
    <location>
        <begin position="130"/>
        <end position="143"/>
    </location>
</feature>
<feature type="helix" evidence="27">
    <location>
        <begin position="157"/>
        <end position="159"/>
    </location>
</feature>
<feature type="strand" evidence="28">
    <location>
        <begin position="187"/>
        <end position="189"/>
    </location>
</feature>
<feature type="strand" evidence="28">
    <location>
        <begin position="192"/>
        <end position="196"/>
    </location>
</feature>
<feature type="helix" evidence="28">
    <location>
        <begin position="203"/>
        <end position="207"/>
    </location>
</feature>
<feature type="helix" evidence="28">
    <location>
        <begin position="214"/>
        <end position="216"/>
    </location>
</feature>
<feature type="strand" evidence="29">
    <location>
        <begin position="218"/>
        <end position="220"/>
    </location>
</feature>
<feature type="helix" evidence="28">
    <location>
        <begin position="229"/>
        <end position="238"/>
    </location>
</feature>
<feature type="helix" evidence="28">
    <location>
        <begin position="243"/>
        <end position="245"/>
    </location>
</feature>
<feature type="turn" evidence="29">
    <location>
        <begin position="263"/>
        <end position="266"/>
    </location>
</feature>
<feature type="strand" evidence="29">
    <location>
        <begin position="270"/>
        <end position="274"/>
    </location>
</feature>
<feature type="strand" evidence="29">
    <location>
        <begin position="280"/>
        <end position="282"/>
    </location>
</feature>
<feature type="helix" evidence="28">
    <location>
        <begin position="283"/>
        <end position="292"/>
    </location>
</feature>
<feature type="strand" evidence="28">
    <location>
        <begin position="297"/>
        <end position="299"/>
    </location>
</feature>
<organism>
    <name type="scientific">Homo sapiens</name>
    <name type="common">Human</name>
    <dbReference type="NCBI Taxonomy" id="9606"/>
    <lineage>
        <taxon>Eukaryota</taxon>
        <taxon>Metazoa</taxon>
        <taxon>Chordata</taxon>
        <taxon>Craniata</taxon>
        <taxon>Vertebrata</taxon>
        <taxon>Euteleostomi</taxon>
        <taxon>Mammalia</taxon>
        <taxon>Eutheria</taxon>
        <taxon>Euarchontoglires</taxon>
        <taxon>Primates</taxon>
        <taxon>Haplorrhini</taxon>
        <taxon>Catarrhini</taxon>
        <taxon>Hominidae</taxon>
        <taxon>Homo</taxon>
    </lineage>
</organism>
<proteinExistence type="evidence at protein level"/>
<name>R113A_HUMAN</name>
<evidence type="ECO:0000255" key="1">
    <source>
        <dbReference type="PROSITE-ProRule" id="PRU00175"/>
    </source>
</evidence>
<evidence type="ECO:0000255" key="2">
    <source>
        <dbReference type="PROSITE-ProRule" id="PRU00723"/>
    </source>
</evidence>
<evidence type="ECO:0000256" key="3">
    <source>
        <dbReference type="SAM" id="MobiDB-lite"/>
    </source>
</evidence>
<evidence type="ECO:0000269" key="4">
    <source>
    </source>
</evidence>
<evidence type="ECO:0000269" key="5">
    <source>
    </source>
</evidence>
<evidence type="ECO:0000269" key="6">
    <source>
    </source>
</evidence>
<evidence type="ECO:0000269" key="7">
    <source>
    </source>
</evidence>
<evidence type="ECO:0000269" key="8">
    <source>
    </source>
</evidence>
<evidence type="ECO:0000269" key="9">
    <source>
    </source>
</evidence>
<evidence type="ECO:0000269" key="10">
    <source>
    </source>
</evidence>
<evidence type="ECO:0000269" key="11">
    <source>
    </source>
</evidence>
<evidence type="ECO:0000303" key="12">
    <source>
    </source>
</evidence>
<evidence type="ECO:0000305" key="13"/>
<evidence type="ECO:0000305" key="14">
    <source>
    </source>
</evidence>
<evidence type="ECO:0007744" key="15">
    <source>
        <dbReference type="PDB" id="5Z56"/>
    </source>
</evidence>
<evidence type="ECO:0007744" key="16">
    <source>
        <dbReference type="PDB" id="5Z58"/>
    </source>
</evidence>
<evidence type="ECO:0007744" key="17">
    <source>
        <dbReference type="PDB" id="6FF4"/>
    </source>
</evidence>
<evidence type="ECO:0007744" key="18">
    <source>
        <dbReference type="PDB" id="7DVQ"/>
    </source>
</evidence>
<evidence type="ECO:0007744" key="19">
    <source>
    </source>
</evidence>
<evidence type="ECO:0007744" key="20">
    <source>
    </source>
</evidence>
<evidence type="ECO:0007744" key="21">
    <source>
    </source>
</evidence>
<evidence type="ECO:0007744" key="22">
    <source>
    </source>
</evidence>
<evidence type="ECO:0007744" key="23">
    <source>
    </source>
</evidence>
<evidence type="ECO:0007744" key="24">
    <source>
    </source>
</evidence>
<evidence type="ECO:0007744" key="25">
    <source>
    </source>
</evidence>
<evidence type="ECO:0007744" key="26">
    <source>
    </source>
</evidence>
<evidence type="ECO:0007829" key="27">
    <source>
        <dbReference type="PDB" id="6FF4"/>
    </source>
</evidence>
<evidence type="ECO:0007829" key="28">
    <source>
        <dbReference type="PDB" id="7DVQ"/>
    </source>
</evidence>
<evidence type="ECO:0007829" key="29">
    <source>
        <dbReference type="PDB" id="7QTT"/>
    </source>
</evidence>
<accession>O15541</accession>
<accession>B2RBR7</accession>